<reference key="1">
    <citation type="journal article" date="2007" name="Science">
        <title>Legumes symbioses: absence of nod genes in photosynthetic bradyrhizobia.</title>
        <authorList>
            <person name="Giraud E."/>
            <person name="Moulin L."/>
            <person name="Vallenet D."/>
            <person name="Barbe V."/>
            <person name="Cytryn E."/>
            <person name="Avarre J.-C."/>
            <person name="Jaubert M."/>
            <person name="Simon D."/>
            <person name="Cartieaux F."/>
            <person name="Prin Y."/>
            <person name="Bena G."/>
            <person name="Hannibal L."/>
            <person name="Fardoux J."/>
            <person name="Kojadinovic M."/>
            <person name="Vuillet L."/>
            <person name="Lajus A."/>
            <person name="Cruveiller S."/>
            <person name="Rouy Z."/>
            <person name="Mangenot S."/>
            <person name="Segurens B."/>
            <person name="Dossat C."/>
            <person name="Franck W.L."/>
            <person name="Chang W.-S."/>
            <person name="Saunders E."/>
            <person name="Bruce D."/>
            <person name="Richardson P."/>
            <person name="Normand P."/>
            <person name="Dreyfus B."/>
            <person name="Pignol D."/>
            <person name="Stacey G."/>
            <person name="Emerich D."/>
            <person name="Vermeglio A."/>
            <person name="Medigue C."/>
            <person name="Sadowsky M."/>
        </authorList>
    </citation>
    <scope>NUCLEOTIDE SEQUENCE [LARGE SCALE GENOMIC DNA]</scope>
    <source>
        <strain>ORS 278</strain>
    </source>
</reference>
<feature type="chain" id="PRO_0000374162" description="tRNA-2-methylthio-N(6)-dimethylallyladenosine synthase">
    <location>
        <begin position="1"/>
        <end position="467"/>
    </location>
</feature>
<feature type="domain" description="MTTase N-terminal" evidence="1">
    <location>
        <begin position="5"/>
        <end position="125"/>
    </location>
</feature>
<feature type="domain" description="Radical SAM core" evidence="2">
    <location>
        <begin position="152"/>
        <end position="384"/>
    </location>
</feature>
<feature type="domain" description="TRAM" evidence="1">
    <location>
        <begin position="387"/>
        <end position="449"/>
    </location>
</feature>
<feature type="binding site" evidence="1">
    <location>
        <position position="14"/>
    </location>
    <ligand>
        <name>[4Fe-4S] cluster</name>
        <dbReference type="ChEBI" id="CHEBI:49883"/>
        <label>1</label>
    </ligand>
</feature>
<feature type="binding site" evidence="1">
    <location>
        <position position="50"/>
    </location>
    <ligand>
        <name>[4Fe-4S] cluster</name>
        <dbReference type="ChEBI" id="CHEBI:49883"/>
        <label>1</label>
    </ligand>
</feature>
<feature type="binding site" evidence="1">
    <location>
        <position position="88"/>
    </location>
    <ligand>
        <name>[4Fe-4S] cluster</name>
        <dbReference type="ChEBI" id="CHEBI:49883"/>
        <label>1</label>
    </ligand>
</feature>
<feature type="binding site" evidence="1">
    <location>
        <position position="166"/>
    </location>
    <ligand>
        <name>[4Fe-4S] cluster</name>
        <dbReference type="ChEBI" id="CHEBI:49883"/>
        <label>2</label>
        <note>4Fe-4S-S-AdoMet</note>
    </ligand>
</feature>
<feature type="binding site" evidence="1">
    <location>
        <position position="170"/>
    </location>
    <ligand>
        <name>[4Fe-4S] cluster</name>
        <dbReference type="ChEBI" id="CHEBI:49883"/>
        <label>2</label>
        <note>4Fe-4S-S-AdoMet</note>
    </ligand>
</feature>
<feature type="binding site" evidence="1">
    <location>
        <position position="173"/>
    </location>
    <ligand>
        <name>[4Fe-4S] cluster</name>
        <dbReference type="ChEBI" id="CHEBI:49883"/>
        <label>2</label>
        <note>4Fe-4S-S-AdoMet</note>
    </ligand>
</feature>
<sequence>MTPPRKLHIKSYGCQMNVYDAQRMVDTLGAEGFVETADAGDADLVILNTCHIREKASEKVYSELGRLRVAKEEAARSGRAMQIAVAGCVAQAEGVEIISRAPTVDVVVGPQSYHHLPQLLAQASRGERAIETEFPAEDKFGFLAKPSREAIRARGVSAFVTVQEGCDKFCTFCVVPYTRGAEMSRPVARIVDDVMQLTDSGVREITLIGQNVNAYHGEGPDGRTWTLGRLLYRIAEIPGVARIRYSTSHPNDVDDGLIAAHRDLTAVMPFVHLPVQSGSDRILAAMNRKHSAADYRRVVDRFRGARDDIAFSSDFIVGFPGETEEDFRATLALIDQIGYAAAYSFKYSPRPGTPAADMQEMVSATEMDERLERLQSLIDSQQAAFNKAAIGSVVDVLFEREARKPGQLVGRTAYLQPAHVMASSDIIGQVLPVRIDSLERYSLLGELVATTAAPIPEAAMPLASIGG</sequence>
<proteinExistence type="inferred from homology"/>
<gene>
    <name evidence="1" type="primary">miaB</name>
    <name type="ordered locus">BRADO0041</name>
</gene>
<organism>
    <name type="scientific">Bradyrhizobium sp. (strain ORS 278)</name>
    <dbReference type="NCBI Taxonomy" id="114615"/>
    <lineage>
        <taxon>Bacteria</taxon>
        <taxon>Pseudomonadati</taxon>
        <taxon>Pseudomonadota</taxon>
        <taxon>Alphaproteobacteria</taxon>
        <taxon>Hyphomicrobiales</taxon>
        <taxon>Nitrobacteraceae</taxon>
        <taxon>Bradyrhizobium</taxon>
    </lineage>
</organism>
<protein>
    <recommendedName>
        <fullName evidence="1">tRNA-2-methylthio-N(6)-dimethylallyladenosine synthase</fullName>
        <ecNumber evidence="1">2.8.4.3</ecNumber>
    </recommendedName>
    <alternativeName>
        <fullName evidence="1">(Dimethylallyl)adenosine tRNA methylthiotransferase MiaB</fullName>
    </alternativeName>
    <alternativeName>
        <fullName evidence="1">tRNA-i(6)A37 methylthiotransferase</fullName>
    </alternativeName>
</protein>
<dbReference type="EC" id="2.8.4.3" evidence="1"/>
<dbReference type="EMBL" id="CU234118">
    <property type="protein sequence ID" value="CAL74013.1"/>
    <property type="molecule type" value="Genomic_DNA"/>
</dbReference>
<dbReference type="RefSeq" id="WP_011923315.1">
    <property type="nucleotide sequence ID" value="NC_009445.1"/>
</dbReference>
<dbReference type="SMR" id="A4YJD7"/>
<dbReference type="STRING" id="114615.BRADO0041"/>
<dbReference type="KEGG" id="bra:BRADO0041"/>
<dbReference type="eggNOG" id="COG0621">
    <property type="taxonomic scope" value="Bacteria"/>
</dbReference>
<dbReference type="HOGENOM" id="CLU_018697_2_0_5"/>
<dbReference type="OrthoDB" id="9805215at2"/>
<dbReference type="Proteomes" id="UP000001994">
    <property type="component" value="Chromosome"/>
</dbReference>
<dbReference type="GO" id="GO:0005829">
    <property type="term" value="C:cytosol"/>
    <property type="evidence" value="ECO:0007669"/>
    <property type="project" value="TreeGrafter"/>
</dbReference>
<dbReference type="GO" id="GO:0051539">
    <property type="term" value="F:4 iron, 4 sulfur cluster binding"/>
    <property type="evidence" value="ECO:0007669"/>
    <property type="project" value="UniProtKB-UniRule"/>
</dbReference>
<dbReference type="GO" id="GO:0046872">
    <property type="term" value="F:metal ion binding"/>
    <property type="evidence" value="ECO:0007669"/>
    <property type="project" value="UniProtKB-KW"/>
</dbReference>
<dbReference type="GO" id="GO:0035597">
    <property type="term" value="F:N6-isopentenyladenosine methylthiotransferase activity"/>
    <property type="evidence" value="ECO:0007669"/>
    <property type="project" value="TreeGrafter"/>
</dbReference>
<dbReference type="CDD" id="cd01335">
    <property type="entry name" value="Radical_SAM"/>
    <property type="match status" value="1"/>
</dbReference>
<dbReference type="FunFam" id="3.40.50.12160:FF:000003">
    <property type="entry name" value="CDK5 regulatory subunit-associated protein 1"/>
    <property type="match status" value="1"/>
</dbReference>
<dbReference type="FunFam" id="3.80.30.20:FF:000001">
    <property type="entry name" value="tRNA-2-methylthio-N(6)-dimethylallyladenosine synthase 2"/>
    <property type="match status" value="1"/>
</dbReference>
<dbReference type="Gene3D" id="3.40.50.12160">
    <property type="entry name" value="Methylthiotransferase, N-terminal domain"/>
    <property type="match status" value="1"/>
</dbReference>
<dbReference type="Gene3D" id="3.80.30.20">
    <property type="entry name" value="tm_1862 like domain"/>
    <property type="match status" value="1"/>
</dbReference>
<dbReference type="HAMAP" id="MF_01864">
    <property type="entry name" value="tRNA_metthiotr_MiaB"/>
    <property type="match status" value="1"/>
</dbReference>
<dbReference type="InterPro" id="IPR006638">
    <property type="entry name" value="Elp3/MiaA/NifB-like_rSAM"/>
</dbReference>
<dbReference type="InterPro" id="IPR005839">
    <property type="entry name" value="Methylthiotransferase"/>
</dbReference>
<dbReference type="InterPro" id="IPR020612">
    <property type="entry name" value="Methylthiotransferase_CS"/>
</dbReference>
<dbReference type="InterPro" id="IPR013848">
    <property type="entry name" value="Methylthiotransferase_N"/>
</dbReference>
<dbReference type="InterPro" id="IPR038135">
    <property type="entry name" value="Methylthiotransferase_N_sf"/>
</dbReference>
<dbReference type="InterPro" id="IPR006463">
    <property type="entry name" value="MiaB_methiolase"/>
</dbReference>
<dbReference type="InterPro" id="IPR007197">
    <property type="entry name" value="rSAM"/>
</dbReference>
<dbReference type="InterPro" id="IPR023404">
    <property type="entry name" value="rSAM_horseshoe"/>
</dbReference>
<dbReference type="InterPro" id="IPR002792">
    <property type="entry name" value="TRAM_dom"/>
</dbReference>
<dbReference type="NCBIfam" id="TIGR01574">
    <property type="entry name" value="miaB-methiolase"/>
    <property type="match status" value="1"/>
</dbReference>
<dbReference type="NCBIfam" id="TIGR00089">
    <property type="entry name" value="MiaB/RimO family radical SAM methylthiotransferase"/>
    <property type="match status" value="1"/>
</dbReference>
<dbReference type="PANTHER" id="PTHR43020">
    <property type="entry name" value="CDK5 REGULATORY SUBUNIT-ASSOCIATED PROTEIN 1"/>
    <property type="match status" value="1"/>
</dbReference>
<dbReference type="PANTHER" id="PTHR43020:SF2">
    <property type="entry name" value="MITOCHONDRIAL TRNA METHYLTHIOTRANSFERASE CDK5RAP1"/>
    <property type="match status" value="1"/>
</dbReference>
<dbReference type="Pfam" id="PF04055">
    <property type="entry name" value="Radical_SAM"/>
    <property type="match status" value="1"/>
</dbReference>
<dbReference type="Pfam" id="PF01938">
    <property type="entry name" value="TRAM"/>
    <property type="match status" value="1"/>
</dbReference>
<dbReference type="Pfam" id="PF00919">
    <property type="entry name" value="UPF0004"/>
    <property type="match status" value="1"/>
</dbReference>
<dbReference type="SFLD" id="SFLDF00273">
    <property type="entry name" value="(dimethylallyl)adenosine_tRNA"/>
    <property type="match status" value="1"/>
</dbReference>
<dbReference type="SFLD" id="SFLDG01082">
    <property type="entry name" value="B12-binding_domain_containing"/>
    <property type="match status" value="1"/>
</dbReference>
<dbReference type="SFLD" id="SFLDS00029">
    <property type="entry name" value="Radical_SAM"/>
    <property type="match status" value="1"/>
</dbReference>
<dbReference type="SMART" id="SM00729">
    <property type="entry name" value="Elp3"/>
    <property type="match status" value="1"/>
</dbReference>
<dbReference type="SUPFAM" id="SSF102114">
    <property type="entry name" value="Radical SAM enzymes"/>
    <property type="match status" value="1"/>
</dbReference>
<dbReference type="PROSITE" id="PS51449">
    <property type="entry name" value="MTTASE_N"/>
    <property type="match status" value="1"/>
</dbReference>
<dbReference type="PROSITE" id="PS01278">
    <property type="entry name" value="MTTASE_RADICAL"/>
    <property type="match status" value="1"/>
</dbReference>
<dbReference type="PROSITE" id="PS51918">
    <property type="entry name" value="RADICAL_SAM"/>
    <property type="match status" value="1"/>
</dbReference>
<dbReference type="PROSITE" id="PS50926">
    <property type="entry name" value="TRAM"/>
    <property type="match status" value="1"/>
</dbReference>
<name>MIAB_BRASO</name>
<accession>A4YJD7</accession>
<evidence type="ECO:0000255" key="1">
    <source>
        <dbReference type="HAMAP-Rule" id="MF_01864"/>
    </source>
</evidence>
<evidence type="ECO:0000255" key="2">
    <source>
        <dbReference type="PROSITE-ProRule" id="PRU01266"/>
    </source>
</evidence>
<keyword id="KW-0004">4Fe-4S</keyword>
<keyword id="KW-0963">Cytoplasm</keyword>
<keyword id="KW-0408">Iron</keyword>
<keyword id="KW-0411">Iron-sulfur</keyword>
<keyword id="KW-0479">Metal-binding</keyword>
<keyword id="KW-1185">Reference proteome</keyword>
<keyword id="KW-0949">S-adenosyl-L-methionine</keyword>
<keyword id="KW-0808">Transferase</keyword>
<keyword id="KW-0819">tRNA processing</keyword>
<comment type="function">
    <text evidence="1">Catalyzes the methylthiolation of N6-(dimethylallyl)adenosine (i(6)A), leading to the formation of 2-methylthio-N6-(dimethylallyl)adenosine (ms(2)i(6)A) at position 37 in tRNAs that read codons beginning with uridine.</text>
</comment>
<comment type="catalytic activity">
    <reaction evidence="1">
        <text>N(6)-dimethylallyladenosine(37) in tRNA + (sulfur carrier)-SH + AH2 + 2 S-adenosyl-L-methionine = 2-methylsulfanyl-N(6)-dimethylallyladenosine(37) in tRNA + (sulfur carrier)-H + 5'-deoxyadenosine + L-methionine + A + S-adenosyl-L-homocysteine + 2 H(+)</text>
        <dbReference type="Rhea" id="RHEA:37067"/>
        <dbReference type="Rhea" id="RHEA-COMP:10375"/>
        <dbReference type="Rhea" id="RHEA-COMP:10376"/>
        <dbReference type="Rhea" id="RHEA-COMP:14737"/>
        <dbReference type="Rhea" id="RHEA-COMP:14739"/>
        <dbReference type="ChEBI" id="CHEBI:13193"/>
        <dbReference type="ChEBI" id="CHEBI:15378"/>
        <dbReference type="ChEBI" id="CHEBI:17319"/>
        <dbReference type="ChEBI" id="CHEBI:17499"/>
        <dbReference type="ChEBI" id="CHEBI:29917"/>
        <dbReference type="ChEBI" id="CHEBI:57844"/>
        <dbReference type="ChEBI" id="CHEBI:57856"/>
        <dbReference type="ChEBI" id="CHEBI:59789"/>
        <dbReference type="ChEBI" id="CHEBI:64428"/>
        <dbReference type="ChEBI" id="CHEBI:74415"/>
        <dbReference type="ChEBI" id="CHEBI:74417"/>
        <dbReference type="EC" id="2.8.4.3"/>
    </reaction>
</comment>
<comment type="cofactor">
    <cofactor evidence="1">
        <name>[4Fe-4S] cluster</name>
        <dbReference type="ChEBI" id="CHEBI:49883"/>
    </cofactor>
    <text evidence="1">Binds 2 [4Fe-4S] clusters. One cluster is coordinated with 3 cysteines and an exchangeable S-adenosyl-L-methionine.</text>
</comment>
<comment type="subunit">
    <text evidence="1">Monomer.</text>
</comment>
<comment type="subcellular location">
    <subcellularLocation>
        <location evidence="1">Cytoplasm</location>
    </subcellularLocation>
</comment>
<comment type="similarity">
    <text evidence="1">Belongs to the methylthiotransferase family. MiaB subfamily.</text>
</comment>